<feature type="chain" id="PRO_1000093614" description="DNA mismatch repair protein MutS">
    <location>
        <begin position="1"/>
        <end position="876"/>
    </location>
</feature>
<feature type="binding site" evidence="1">
    <location>
        <begin position="628"/>
        <end position="635"/>
    </location>
    <ligand>
        <name>ATP</name>
        <dbReference type="ChEBI" id="CHEBI:30616"/>
    </ligand>
</feature>
<protein>
    <recommendedName>
        <fullName evidence="1">DNA mismatch repair protein MutS</fullName>
    </recommendedName>
</protein>
<organism>
    <name type="scientific">Chlorobaculum parvum (strain DSM 263 / NCIMB 8327)</name>
    <name type="common">Chlorobium vibrioforme subsp. thiosulfatophilum</name>
    <dbReference type="NCBI Taxonomy" id="517417"/>
    <lineage>
        <taxon>Bacteria</taxon>
        <taxon>Pseudomonadati</taxon>
        <taxon>Chlorobiota</taxon>
        <taxon>Chlorobiia</taxon>
        <taxon>Chlorobiales</taxon>
        <taxon>Chlorobiaceae</taxon>
        <taxon>Chlorobaculum</taxon>
    </lineage>
</organism>
<gene>
    <name evidence="1" type="primary">mutS</name>
    <name type="ordered locus">Cpar_1590</name>
</gene>
<reference key="1">
    <citation type="submission" date="2008-06" db="EMBL/GenBank/DDBJ databases">
        <title>Complete sequence of Chlorobaculum parvum NCIB 8327.</title>
        <authorList>
            <consortium name="US DOE Joint Genome Institute"/>
            <person name="Lucas S."/>
            <person name="Copeland A."/>
            <person name="Lapidus A."/>
            <person name="Glavina del Rio T."/>
            <person name="Dalin E."/>
            <person name="Tice H."/>
            <person name="Bruce D."/>
            <person name="Goodwin L."/>
            <person name="Pitluck S."/>
            <person name="Schmutz J."/>
            <person name="Larimer F."/>
            <person name="Land M."/>
            <person name="Hauser L."/>
            <person name="Kyrpides N."/>
            <person name="Mikhailova N."/>
            <person name="Zhao F."/>
            <person name="Li T."/>
            <person name="Liu Z."/>
            <person name="Overmann J."/>
            <person name="Bryant D.A."/>
            <person name="Richardson P."/>
        </authorList>
    </citation>
    <scope>NUCLEOTIDE SEQUENCE [LARGE SCALE GENOMIC DNA]</scope>
    <source>
        <strain>DSM 263 / NCIMB 8327</strain>
    </source>
</reference>
<comment type="function">
    <text evidence="1">This protein is involved in the repair of mismatches in DNA. It is possible that it carries out the mismatch recognition step. This protein has a weak ATPase activity.</text>
</comment>
<comment type="similarity">
    <text evidence="1">Belongs to the DNA mismatch repair MutS family.</text>
</comment>
<accession>B3QPY5</accession>
<dbReference type="EMBL" id="CP001099">
    <property type="protein sequence ID" value="ACF11988.1"/>
    <property type="molecule type" value="Genomic_DNA"/>
</dbReference>
<dbReference type="RefSeq" id="WP_012502821.1">
    <property type="nucleotide sequence ID" value="NC_011027.1"/>
</dbReference>
<dbReference type="SMR" id="B3QPY5"/>
<dbReference type="STRING" id="517417.Cpar_1590"/>
<dbReference type="KEGG" id="cpc:Cpar_1590"/>
<dbReference type="eggNOG" id="COG0249">
    <property type="taxonomic scope" value="Bacteria"/>
</dbReference>
<dbReference type="HOGENOM" id="CLU_002472_4_0_10"/>
<dbReference type="OrthoDB" id="9802448at2"/>
<dbReference type="Proteomes" id="UP000008811">
    <property type="component" value="Chromosome"/>
</dbReference>
<dbReference type="GO" id="GO:0005829">
    <property type="term" value="C:cytosol"/>
    <property type="evidence" value="ECO:0007669"/>
    <property type="project" value="TreeGrafter"/>
</dbReference>
<dbReference type="GO" id="GO:0005524">
    <property type="term" value="F:ATP binding"/>
    <property type="evidence" value="ECO:0007669"/>
    <property type="project" value="UniProtKB-UniRule"/>
</dbReference>
<dbReference type="GO" id="GO:0140664">
    <property type="term" value="F:ATP-dependent DNA damage sensor activity"/>
    <property type="evidence" value="ECO:0007669"/>
    <property type="project" value="InterPro"/>
</dbReference>
<dbReference type="GO" id="GO:0003684">
    <property type="term" value="F:damaged DNA binding"/>
    <property type="evidence" value="ECO:0007669"/>
    <property type="project" value="UniProtKB-UniRule"/>
</dbReference>
<dbReference type="GO" id="GO:0030983">
    <property type="term" value="F:mismatched DNA binding"/>
    <property type="evidence" value="ECO:0007669"/>
    <property type="project" value="InterPro"/>
</dbReference>
<dbReference type="GO" id="GO:0006298">
    <property type="term" value="P:mismatch repair"/>
    <property type="evidence" value="ECO:0007669"/>
    <property type="project" value="UniProtKB-UniRule"/>
</dbReference>
<dbReference type="CDD" id="cd03284">
    <property type="entry name" value="ABC_MutS1"/>
    <property type="match status" value="1"/>
</dbReference>
<dbReference type="FunFam" id="3.40.1170.10:FF:000001">
    <property type="entry name" value="DNA mismatch repair protein MutS"/>
    <property type="match status" value="1"/>
</dbReference>
<dbReference type="FunFam" id="3.40.50.300:FF:000870">
    <property type="entry name" value="MutS protein homolog 4"/>
    <property type="match status" value="1"/>
</dbReference>
<dbReference type="Gene3D" id="1.10.1420.10">
    <property type="match status" value="2"/>
</dbReference>
<dbReference type="Gene3D" id="3.40.1170.10">
    <property type="entry name" value="DNA repair protein MutS, domain I"/>
    <property type="match status" value="1"/>
</dbReference>
<dbReference type="Gene3D" id="3.30.420.110">
    <property type="entry name" value="MutS, connector domain"/>
    <property type="match status" value="1"/>
</dbReference>
<dbReference type="Gene3D" id="3.40.50.300">
    <property type="entry name" value="P-loop containing nucleotide triphosphate hydrolases"/>
    <property type="match status" value="1"/>
</dbReference>
<dbReference type="HAMAP" id="MF_00096">
    <property type="entry name" value="MutS"/>
    <property type="match status" value="1"/>
</dbReference>
<dbReference type="InterPro" id="IPR005748">
    <property type="entry name" value="DNA_mismatch_repair_MutS"/>
</dbReference>
<dbReference type="InterPro" id="IPR007695">
    <property type="entry name" value="DNA_mismatch_repair_MutS-lik_N"/>
</dbReference>
<dbReference type="InterPro" id="IPR017261">
    <property type="entry name" value="DNA_mismatch_repair_MutS/MSH"/>
</dbReference>
<dbReference type="InterPro" id="IPR000432">
    <property type="entry name" value="DNA_mismatch_repair_MutS_C"/>
</dbReference>
<dbReference type="InterPro" id="IPR007861">
    <property type="entry name" value="DNA_mismatch_repair_MutS_clamp"/>
</dbReference>
<dbReference type="InterPro" id="IPR007696">
    <property type="entry name" value="DNA_mismatch_repair_MutS_core"/>
</dbReference>
<dbReference type="InterPro" id="IPR016151">
    <property type="entry name" value="DNA_mismatch_repair_MutS_N"/>
</dbReference>
<dbReference type="InterPro" id="IPR036187">
    <property type="entry name" value="DNA_mismatch_repair_MutS_sf"/>
</dbReference>
<dbReference type="InterPro" id="IPR007860">
    <property type="entry name" value="DNA_mmatch_repair_MutS_con_dom"/>
</dbReference>
<dbReference type="InterPro" id="IPR045076">
    <property type="entry name" value="MutS"/>
</dbReference>
<dbReference type="InterPro" id="IPR036678">
    <property type="entry name" value="MutS_con_dom_sf"/>
</dbReference>
<dbReference type="InterPro" id="IPR027417">
    <property type="entry name" value="P-loop_NTPase"/>
</dbReference>
<dbReference type="NCBIfam" id="TIGR01070">
    <property type="entry name" value="mutS1"/>
    <property type="match status" value="1"/>
</dbReference>
<dbReference type="NCBIfam" id="NF003810">
    <property type="entry name" value="PRK05399.1"/>
    <property type="match status" value="1"/>
</dbReference>
<dbReference type="PANTHER" id="PTHR11361:SF34">
    <property type="entry name" value="DNA MISMATCH REPAIR PROTEIN MSH1, MITOCHONDRIAL"/>
    <property type="match status" value="1"/>
</dbReference>
<dbReference type="PANTHER" id="PTHR11361">
    <property type="entry name" value="DNA MISMATCH REPAIR PROTEIN MUTS FAMILY MEMBER"/>
    <property type="match status" value="1"/>
</dbReference>
<dbReference type="Pfam" id="PF01624">
    <property type="entry name" value="MutS_I"/>
    <property type="match status" value="1"/>
</dbReference>
<dbReference type="Pfam" id="PF05188">
    <property type="entry name" value="MutS_II"/>
    <property type="match status" value="1"/>
</dbReference>
<dbReference type="Pfam" id="PF05192">
    <property type="entry name" value="MutS_III"/>
    <property type="match status" value="1"/>
</dbReference>
<dbReference type="Pfam" id="PF05190">
    <property type="entry name" value="MutS_IV"/>
    <property type="match status" value="1"/>
</dbReference>
<dbReference type="Pfam" id="PF00488">
    <property type="entry name" value="MutS_V"/>
    <property type="match status" value="1"/>
</dbReference>
<dbReference type="PIRSF" id="PIRSF037677">
    <property type="entry name" value="DNA_mis_repair_Msh6"/>
    <property type="match status" value="1"/>
</dbReference>
<dbReference type="SMART" id="SM00534">
    <property type="entry name" value="MUTSac"/>
    <property type="match status" value="1"/>
</dbReference>
<dbReference type="SMART" id="SM00533">
    <property type="entry name" value="MUTSd"/>
    <property type="match status" value="1"/>
</dbReference>
<dbReference type="SUPFAM" id="SSF55271">
    <property type="entry name" value="DNA repair protein MutS, domain I"/>
    <property type="match status" value="1"/>
</dbReference>
<dbReference type="SUPFAM" id="SSF53150">
    <property type="entry name" value="DNA repair protein MutS, domain II"/>
    <property type="match status" value="1"/>
</dbReference>
<dbReference type="SUPFAM" id="SSF48334">
    <property type="entry name" value="DNA repair protein MutS, domain III"/>
    <property type="match status" value="1"/>
</dbReference>
<dbReference type="SUPFAM" id="SSF52540">
    <property type="entry name" value="P-loop containing nucleoside triphosphate hydrolases"/>
    <property type="match status" value="1"/>
</dbReference>
<dbReference type="PROSITE" id="PS00486">
    <property type="entry name" value="DNA_MISMATCH_REPAIR_2"/>
    <property type="match status" value="1"/>
</dbReference>
<proteinExistence type="inferred from homology"/>
<keyword id="KW-0067">ATP-binding</keyword>
<keyword id="KW-0227">DNA damage</keyword>
<keyword id="KW-0234">DNA repair</keyword>
<keyword id="KW-0238">DNA-binding</keyword>
<keyword id="KW-0547">Nucleotide-binding</keyword>
<name>MUTS_CHLP8</name>
<sequence>MAKSAQGRKKEPTPMMRQYLEVKERYPEYVLLFRVGDFYETFLDDAVTVSAALNIVLTKRSNGSAGEIPLAGFPHHASEGYIAKLVTKGFKVAVCDQVEDPALAKGIVKREITDIVTPGITYSDKILDDRHNNYLCAVALFKRGREHLAGVAFVDVTTAEFRMTELPVAELKDFLQSLHPSEILISSRDKELRDSLAKSMNTLFTVLDEWMFSAEQASQVLENHFKTHSLKGFGIDGVEGGRIAAGAILQYLEEAKQGSLKYLVRIGLVESAETMTLDIQTRRNLEIISSMQDGSLNGSLLEVIDRTKNPMGARLLRRWLLHPLRKLEAVVQRHDAVEELLESDSMREESRQLLGGIIDLERALARIATSRAMPREVRLLGSSFALIPQLKAMLASCEAQRLRHLADRLDSLPELAETIERALDPEASGTLRDGGYIRAGYHEELDELRAISSGARDRLLEIQQAERSKTSISTLKVQYNKVFGYYIEVSRANSDKVPEYYEKKQTLVNAERYTIPALKEYEEKILTAEEKSQFLEHRLFQELCAAVAAEAASIQKTAAALAELDCLACFASCADEYRYCRPAMNEGTELSITGGRHPVLERILGADEPYVANDCRVGSDQQLLIITGPNMAGKSSYLRQAGLVVLLAQVGSFVPAESAEIGLVDRIFTRVGASDNLTSGESTFLVEMNEAASILNNATERSLLLLDEIGRGTSTFDGMSIAWSMCEFIHDRLRARTLFATHYHELAELESRFERIVNFNATVVETADTVIFLRKIVRGASDNSYGIEVAKMAGMPPEVIERAREILAGMERREVEVPTQREAPPRVVSQQISLFEEEESRLRKALSGIDINRLTPLDAMMELKRLQDIALGKSKA</sequence>
<evidence type="ECO:0000255" key="1">
    <source>
        <dbReference type="HAMAP-Rule" id="MF_00096"/>
    </source>
</evidence>